<sequence>MSMQDHDRTEQGMTSLAVTRHLDGSSRPDWDRVAEETPVALVFNGISHAVMMATPLDLEWLAVGFALSEGIVARRAEIFDIESDFVCGGAEVRLEIAQPAFLALKDRRRSLAGRTGCGVCGIESLAMLDLSPEPIAGPAGPVSADPAAIARAAAELPAHQRLMQATGCAHAAAWCGRDGGVRMAFEDVGRHNALDKLIGWLALEGMDPADGFVFMSSRASYELARKCARTGIPLLATISAPTSLAVDIARRAGVALASFCRRTGFVEYTA</sequence>
<dbReference type="EMBL" id="AE016825">
    <property type="protein sequence ID" value="AAQ59300.1"/>
    <property type="molecule type" value="Genomic_DNA"/>
</dbReference>
<dbReference type="RefSeq" id="WP_011135176.1">
    <property type="nucleotide sequence ID" value="NC_005085.1"/>
</dbReference>
<dbReference type="SMR" id="Q7NXK2"/>
<dbReference type="STRING" id="243365.CV_1624"/>
<dbReference type="KEGG" id="cvi:CV_1624"/>
<dbReference type="eggNOG" id="COG1526">
    <property type="taxonomic scope" value="Bacteria"/>
</dbReference>
<dbReference type="HOGENOM" id="CLU_056887_2_0_4"/>
<dbReference type="OrthoDB" id="3197277at2"/>
<dbReference type="Proteomes" id="UP000001424">
    <property type="component" value="Chromosome"/>
</dbReference>
<dbReference type="GO" id="GO:0005737">
    <property type="term" value="C:cytoplasm"/>
    <property type="evidence" value="ECO:0007669"/>
    <property type="project" value="UniProtKB-SubCell"/>
</dbReference>
<dbReference type="GO" id="GO:0097163">
    <property type="term" value="F:sulfur carrier activity"/>
    <property type="evidence" value="ECO:0007669"/>
    <property type="project" value="UniProtKB-UniRule"/>
</dbReference>
<dbReference type="GO" id="GO:0016783">
    <property type="term" value="F:sulfurtransferase activity"/>
    <property type="evidence" value="ECO:0007669"/>
    <property type="project" value="InterPro"/>
</dbReference>
<dbReference type="GO" id="GO:0006777">
    <property type="term" value="P:Mo-molybdopterin cofactor biosynthetic process"/>
    <property type="evidence" value="ECO:0007669"/>
    <property type="project" value="UniProtKB-UniRule"/>
</dbReference>
<dbReference type="Gene3D" id="3.10.20.10">
    <property type="match status" value="1"/>
</dbReference>
<dbReference type="Gene3D" id="3.40.140.10">
    <property type="entry name" value="Cytidine Deaminase, domain 2"/>
    <property type="match status" value="1"/>
</dbReference>
<dbReference type="HAMAP" id="MF_00187">
    <property type="entry name" value="FdhD"/>
    <property type="match status" value="1"/>
</dbReference>
<dbReference type="InterPro" id="IPR016193">
    <property type="entry name" value="Cytidine_deaminase-like"/>
</dbReference>
<dbReference type="InterPro" id="IPR003786">
    <property type="entry name" value="FdhD"/>
</dbReference>
<dbReference type="NCBIfam" id="TIGR00129">
    <property type="entry name" value="fdhD_narQ"/>
    <property type="match status" value="1"/>
</dbReference>
<dbReference type="PANTHER" id="PTHR30592">
    <property type="entry name" value="FORMATE DEHYDROGENASE"/>
    <property type="match status" value="1"/>
</dbReference>
<dbReference type="PANTHER" id="PTHR30592:SF1">
    <property type="entry name" value="SULFUR CARRIER PROTEIN FDHD"/>
    <property type="match status" value="1"/>
</dbReference>
<dbReference type="Pfam" id="PF02634">
    <property type="entry name" value="FdhD-NarQ"/>
    <property type="match status" value="1"/>
</dbReference>
<dbReference type="PIRSF" id="PIRSF015626">
    <property type="entry name" value="FdhD"/>
    <property type="match status" value="1"/>
</dbReference>
<dbReference type="SUPFAM" id="SSF53927">
    <property type="entry name" value="Cytidine deaminase-like"/>
    <property type="match status" value="1"/>
</dbReference>
<organism>
    <name type="scientific">Chromobacterium violaceum (strain ATCC 12472 / DSM 30191 / JCM 1249 / CCUG 213 / NBRC 12614 / NCIMB 9131 / NCTC 9757 / MK)</name>
    <dbReference type="NCBI Taxonomy" id="243365"/>
    <lineage>
        <taxon>Bacteria</taxon>
        <taxon>Pseudomonadati</taxon>
        <taxon>Pseudomonadota</taxon>
        <taxon>Betaproteobacteria</taxon>
        <taxon>Neisseriales</taxon>
        <taxon>Chromobacteriaceae</taxon>
        <taxon>Chromobacterium</taxon>
    </lineage>
</organism>
<comment type="function">
    <text evidence="1">Required for formate dehydrogenase (FDH) activity. Acts as a sulfur carrier protein that transfers sulfur from IscS to the molybdenum cofactor prior to its insertion into FDH.</text>
</comment>
<comment type="subcellular location">
    <subcellularLocation>
        <location evidence="1">Cytoplasm</location>
    </subcellularLocation>
</comment>
<comment type="similarity">
    <text evidence="1">Belongs to the FdhD family.</text>
</comment>
<accession>Q7NXK2</accession>
<name>FDHD_CHRVO</name>
<gene>
    <name evidence="1" type="primary">fdhD</name>
    <name type="ordered locus">CV_1624</name>
</gene>
<feature type="chain" id="PRO_0000152897" description="Sulfur carrier protein FdhD">
    <location>
        <begin position="1"/>
        <end position="270"/>
    </location>
</feature>
<feature type="region of interest" description="Disordered" evidence="2">
    <location>
        <begin position="1"/>
        <end position="30"/>
    </location>
</feature>
<feature type="compositionally biased region" description="Basic and acidic residues" evidence="2">
    <location>
        <begin position="1"/>
        <end position="10"/>
    </location>
</feature>
<feature type="compositionally biased region" description="Basic and acidic residues" evidence="2">
    <location>
        <begin position="20"/>
        <end position="30"/>
    </location>
</feature>
<feature type="active site" description="Cysteine persulfide intermediate" evidence="1">
    <location>
        <position position="117"/>
    </location>
</feature>
<keyword id="KW-0963">Cytoplasm</keyword>
<keyword id="KW-0501">Molybdenum cofactor biosynthesis</keyword>
<keyword id="KW-1185">Reference proteome</keyword>
<proteinExistence type="inferred from homology"/>
<evidence type="ECO:0000255" key="1">
    <source>
        <dbReference type="HAMAP-Rule" id="MF_00187"/>
    </source>
</evidence>
<evidence type="ECO:0000256" key="2">
    <source>
        <dbReference type="SAM" id="MobiDB-lite"/>
    </source>
</evidence>
<protein>
    <recommendedName>
        <fullName evidence="1">Sulfur carrier protein FdhD</fullName>
    </recommendedName>
</protein>
<reference key="1">
    <citation type="journal article" date="2003" name="Proc. Natl. Acad. Sci. U.S.A.">
        <title>The complete genome sequence of Chromobacterium violaceum reveals remarkable and exploitable bacterial adaptability.</title>
        <authorList>
            <person name="Vasconcelos A.T.R."/>
            <person name="de Almeida D.F."/>
            <person name="Hungria M."/>
            <person name="Guimaraes C.T."/>
            <person name="Antonio R.V."/>
            <person name="Almeida F.C."/>
            <person name="de Almeida L.G.P."/>
            <person name="de Almeida R."/>
            <person name="Alves-Gomes J.A."/>
            <person name="Andrade E.M."/>
            <person name="Araripe J."/>
            <person name="de Araujo M.F.F."/>
            <person name="Astolfi-Filho S."/>
            <person name="Azevedo V."/>
            <person name="Baptista A.J."/>
            <person name="Bataus L.A.M."/>
            <person name="Batista J.S."/>
            <person name="Belo A."/>
            <person name="van den Berg C."/>
            <person name="Bogo M."/>
            <person name="Bonatto S."/>
            <person name="Bordignon J."/>
            <person name="Brigido M.M."/>
            <person name="Brito C.A."/>
            <person name="Brocchi M."/>
            <person name="Burity H.A."/>
            <person name="Camargo A.A."/>
            <person name="Cardoso D.D.P."/>
            <person name="Carneiro N.P."/>
            <person name="Carraro D.M."/>
            <person name="Carvalho C.M.B."/>
            <person name="Cascardo J.C.M."/>
            <person name="Cavada B.S."/>
            <person name="Chueire L.M.O."/>
            <person name="Creczynski-Pasa T.B."/>
            <person name="Cunha-Junior N.C."/>
            <person name="Fagundes N."/>
            <person name="Falcao C.L."/>
            <person name="Fantinatti F."/>
            <person name="Farias I.P."/>
            <person name="Felipe M.S.S."/>
            <person name="Ferrari L.P."/>
            <person name="Ferro J.A."/>
            <person name="Ferro M.I.T."/>
            <person name="Franco G.R."/>
            <person name="Freitas N.S.A."/>
            <person name="Furlan L.R."/>
            <person name="Gazzinelli R.T."/>
            <person name="Gomes E.A."/>
            <person name="Goncalves P.R."/>
            <person name="Grangeiro T.B."/>
            <person name="Grattapaglia D."/>
            <person name="Grisard E.C."/>
            <person name="Hanna E.S."/>
            <person name="Jardim S.N."/>
            <person name="Laurino J."/>
            <person name="Leoi L.C.T."/>
            <person name="Lima L.F.A."/>
            <person name="Loureiro M.F."/>
            <person name="Lyra M.C.C.P."/>
            <person name="Madeira H.M.F."/>
            <person name="Manfio G.P."/>
            <person name="Maranhao A.Q."/>
            <person name="Martins W.S."/>
            <person name="di Mauro S.M.Z."/>
            <person name="de Medeiros S.R.B."/>
            <person name="Meissner R.V."/>
            <person name="Moreira M.A.M."/>
            <person name="Nascimento F.F."/>
            <person name="Nicolas M.F."/>
            <person name="Oliveira J.G."/>
            <person name="Oliveira S.C."/>
            <person name="Paixao R.F.C."/>
            <person name="Parente J.A."/>
            <person name="Pedrosa F.O."/>
            <person name="Pena S.D.J."/>
            <person name="Pereira J.O."/>
            <person name="Pereira M."/>
            <person name="Pinto L.S.R.C."/>
            <person name="Pinto L.S."/>
            <person name="Porto J.I.R."/>
            <person name="Potrich D.P."/>
            <person name="Ramalho-Neto C.E."/>
            <person name="Reis A.M.M."/>
            <person name="Rigo L.U."/>
            <person name="Rondinelli E."/>
            <person name="Santos E.B.P."/>
            <person name="Santos F.R."/>
            <person name="Schneider M.P.C."/>
            <person name="Seuanez H.N."/>
            <person name="Silva A.M.R."/>
            <person name="da Silva A.L.C."/>
            <person name="Silva D.W."/>
            <person name="Silva R."/>
            <person name="Simoes I.C."/>
            <person name="Simon D."/>
            <person name="Soares C.M.A."/>
            <person name="Soares R.B.A."/>
            <person name="Souza E.M."/>
            <person name="Souza K.R.L."/>
            <person name="Souza R.C."/>
            <person name="Steffens M.B.R."/>
            <person name="Steindel M."/>
            <person name="Teixeira S.R."/>
            <person name="Urmenyi T."/>
            <person name="Vettore A."/>
            <person name="Wassem R."/>
            <person name="Zaha A."/>
            <person name="Simpson A.J.G."/>
        </authorList>
    </citation>
    <scope>NUCLEOTIDE SEQUENCE [LARGE SCALE GENOMIC DNA]</scope>
    <source>
        <strain>ATCC 12472 / DSM 30191 / JCM 1249 / CCUG 213 / NBRC 12614 / NCIMB 9131 / NCTC 9757 / MK</strain>
    </source>
</reference>